<feature type="chain" id="PRO_0000128285" description="Pantothenate synthetase">
    <location>
        <begin position="1"/>
        <end position="291"/>
    </location>
</feature>
<feature type="active site" description="Proton donor" evidence="1">
    <location>
        <position position="37"/>
    </location>
</feature>
<feature type="binding site" evidence="1">
    <location>
        <begin position="30"/>
        <end position="37"/>
    </location>
    <ligand>
        <name>ATP</name>
        <dbReference type="ChEBI" id="CHEBI:30616"/>
    </ligand>
</feature>
<feature type="binding site" evidence="1">
    <location>
        <position position="61"/>
    </location>
    <ligand>
        <name>(R)-pantoate</name>
        <dbReference type="ChEBI" id="CHEBI:15980"/>
    </ligand>
</feature>
<feature type="binding site" evidence="1">
    <location>
        <position position="61"/>
    </location>
    <ligand>
        <name>beta-alanine</name>
        <dbReference type="ChEBI" id="CHEBI:57966"/>
    </ligand>
</feature>
<feature type="binding site" evidence="1">
    <location>
        <begin position="149"/>
        <end position="152"/>
    </location>
    <ligand>
        <name>ATP</name>
        <dbReference type="ChEBI" id="CHEBI:30616"/>
    </ligand>
</feature>
<feature type="binding site" evidence="1">
    <location>
        <position position="155"/>
    </location>
    <ligand>
        <name>(R)-pantoate</name>
        <dbReference type="ChEBI" id="CHEBI:15980"/>
    </ligand>
</feature>
<feature type="binding site" evidence="1">
    <location>
        <position position="178"/>
    </location>
    <ligand>
        <name>ATP</name>
        <dbReference type="ChEBI" id="CHEBI:30616"/>
    </ligand>
</feature>
<feature type="binding site" evidence="1">
    <location>
        <begin position="186"/>
        <end position="189"/>
    </location>
    <ligand>
        <name>ATP</name>
        <dbReference type="ChEBI" id="CHEBI:30616"/>
    </ligand>
</feature>
<dbReference type="EC" id="6.3.2.1" evidence="1"/>
<dbReference type="EMBL" id="CP000020">
    <property type="protein sequence ID" value="AAW86665.1"/>
    <property type="molecule type" value="Genomic_DNA"/>
</dbReference>
<dbReference type="RefSeq" id="WP_011262612.1">
    <property type="nucleotide sequence ID" value="NC_006840.2"/>
</dbReference>
<dbReference type="RefSeq" id="YP_205553.1">
    <property type="nucleotide sequence ID" value="NC_006840.2"/>
</dbReference>
<dbReference type="SMR" id="Q5E2T1"/>
<dbReference type="STRING" id="312309.VF_2170"/>
<dbReference type="EnsemblBacteria" id="AAW86665">
    <property type="protein sequence ID" value="AAW86665"/>
    <property type="gene ID" value="VF_2170"/>
</dbReference>
<dbReference type="GeneID" id="54164888"/>
<dbReference type="KEGG" id="vfi:VF_2170"/>
<dbReference type="PATRIC" id="fig|312309.11.peg.2211"/>
<dbReference type="eggNOG" id="COG0414">
    <property type="taxonomic scope" value="Bacteria"/>
</dbReference>
<dbReference type="HOGENOM" id="CLU_047148_0_0_6"/>
<dbReference type="OrthoDB" id="9773087at2"/>
<dbReference type="UniPathway" id="UPA00028">
    <property type="reaction ID" value="UER00005"/>
</dbReference>
<dbReference type="Proteomes" id="UP000000537">
    <property type="component" value="Chromosome I"/>
</dbReference>
<dbReference type="GO" id="GO:0005829">
    <property type="term" value="C:cytosol"/>
    <property type="evidence" value="ECO:0007669"/>
    <property type="project" value="TreeGrafter"/>
</dbReference>
<dbReference type="GO" id="GO:0005524">
    <property type="term" value="F:ATP binding"/>
    <property type="evidence" value="ECO:0007669"/>
    <property type="project" value="UniProtKB-KW"/>
</dbReference>
<dbReference type="GO" id="GO:0004592">
    <property type="term" value="F:pantoate-beta-alanine ligase activity"/>
    <property type="evidence" value="ECO:0007669"/>
    <property type="project" value="UniProtKB-UniRule"/>
</dbReference>
<dbReference type="GO" id="GO:0015940">
    <property type="term" value="P:pantothenate biosynthetic process"/>
    <property type="evidence" value="ECO:0007669"/>
    <property type="project" value="UniProtKB-UniRule"/>
</dbReference>
<dbReference type="CDD" id="cd00560">
    <property type="entry name" value="PanC"/>
    <property type="match status" value="1"/>
</dbReference>
<dbReference type="FunFam" id="3.40.50.620:FF:000013">
    <property type="entry name" value="Pantothenate synthetase"/>
    <property type="match status" value="1"/>
</dbReference>
<dbReference type="Gene3D" id="3.40.50.620">
    <property type="entry name" value="HUPs"/>
    <property type="match status" value="1"/>
</dbReference>
<dbReference type="Gene3D" id="3.30.1300.10">
    <property type="entry name" value="Pantoate-beta-alanine ligase, C-terminal domain"/>
    <property type="match status" value="1"/>
</dbReference>
<dbReference type="HAMAP" id="MF_00158">
    <property type="entry name" value="PanC"/>
    <property type="match status" value="1"/>
</dbReference>
<dbReference type="InterPro" id="IPR004821">
    <property type="entry name" value="Cyt_trans-like"/>
</dbReference>
<dbReference type="InterPro" id="IPR003721">
    <property type="entry name" value="Pantoate_ligase"/>
</dbReference>
<dbReference type="InterPro" id="IPR042176">
    <property type="entry name" value="Pantoate_ligase_C"/>
</dbReference>
<dbReference type="InterPro" id="IPR014729">
    <property type="entry name" value="Rossmann-like_a/b/a_fold"/>
</dbReference>
<dbReference type="NCBIfam" id="TIGR00125">
    <property type="entry name" value="cyt_tran_rel"/>
    <property type="match status" value="1"/>
</dbReference>
<dbReference type="NCBIfam" id="TIGR00018">
    <property type="entry name" value="panC"/>
    <property type="match status" value="1"/>
</dbReference>
<dbReference type="PANTHER" id="PTHR21299">
    <property type="entry name" value="CYTIDYLATE KINASE/PANTOATE-BETA-ALANINE LIGASE"/>
    <property type="match status" value="1"/>
</dbReference>
<dbReference type="PANTHER" id="PTHR21299:SF1">
    <property type="entry name" value="PANTOATE--BETA-ALANINE LIGASE"/>
    <property type="match status" value="1"/>
</dbReference>
<dbReference type="Pfam" id="PF02569">
    <property type="entry name" value="Pantoate_ligase"/>
    <property type="match status" value="1"/>
</dbReference>
<dbReference type="SUPFAM" id="SSF52374">
    <property type="entry name" value="Nucleotidylyl transferase"/>
    <property type="match status" value="1"/>
</dbReference>
<name>PANC_ALIF1</name>
<comment type="function">
    <text evidence="1">Catalyzes the condensation of pantoate with beta-alanine in an ATP-dependent reaction via a pantoyl-adenylate intermediate.</text>
</comment>
<comment type="catalytic activity">
    <reaction evidence="1">
        <text>(R)-pantoate + beta-alanine + ATP = (R)-pantothenate + AMP + diphosphate + H(+)</text>
        <dbReference type="Rhea" id="RHEA:10912"/>
        <dbReference type="ChEBI" id="CHEBI:15378"/>
        <dbReference type="ChEBI" id="CHEBI:15980"/>
        <dbReference type="ChEBI" id="CHEBI:29032"/>
        <dbReference type="ChEBI" id="CHEBI:30616"/>
        <dbReference type="ChEBI" id="CHEBI:33019"/>
        <dbReference type="ChEBI" id="CHEBI:57966"/>
        <dbReference type="ChEBI" id="CHEBI:456215"/>
        <dbReference type="EC" id="6.3.2.1"/>
    </reaction>
</comment>
<comment type="pathway">
    <text evidence="1">Cofactor biosynthesis; (R)-pantothenate biosynthesis; (R)-pantothenate from (R)-pantoate and beta-alanine: step 1/1.</text>
</comment>
<comment type="subunit">
    <text evidence="1">Homodimer.</text>
</comment>
<comment type="subcellular location">
    <subcellularLocation>
        <location evidence="1">Cytoplasm</location>
    </subcellularLocation>
</comment>
<comment type="miscellaneous">
    <text evidence="1">The reaction proceeds by a bi uni uni bi ping pong mechanism.</text>
</comment>
<comment type="similarity">
    <text evidence="1">Belongs to the pantothenate synthetase family.</text>
</comment>
<sequence length="291" mass="32702">MDIFSEILPLREQIKAWKREGKRIAFVPTMGNLHEGHLTLIRTAREHADIVVASIFVNPMQFNNADDLTNYPRTLDEDVEKLTAENVDLVFTPTPEIMYPEGLEKQTTVDVPVISTILEGASRPGHFKGVSTVVNKLFNIVQPDVACFGEKDFQQLALIRQMVIDMALDVEIVGVPTVREMDGLAMSSRNNLLTLNERQRAPVLARTMRWISSQMRGGRNDYLSLIEDASDQLRAADLQPDEIFIRDARTLQEPTEETTQAIILMAAFLGQVRLIDNLVVELAAASNDEEE</sequence>
<evidence type="ECO:0000255" key="1">
    <source>
        <dbReference type="HAMAP-Rule" id="MF_00158"/>
    </source>
</evidence>
<protein>
    <recommendedName>
        <fullName evidence="1">Pantothenate synthetase</fullName>
        <shortName evidence="1">PS</shortName>
        <ecNumber evidence="1">6.3.2.1</ecNumber>
    </recommendedName>
    <alternativeName>
        <fullName evidence="1">Pantoate--beta-alanine ligase</fullName>
    </alternativeName>
    <alternativeName>
        <fullName evidence="1">Pantoate-activating enzyme</fullName>
    </alternativeName>
</protein>
<keyword id="KW-0067">ATP-binding</keyword>
<keyword id="KW-0963">Cytoplasm</keyword>
<keyword id="KW-0436">Ligase</keyword>
<keyword id="KW-0547">Nucleotide-binding</keyword>
<keyword id="KW-0566">Pantothenate biosynthesis</keyword>
<keyword id="KW-1185">Reference proteome</keyword>
<gene>
    <name evidence="1" type="primary">panC</name>
    <name type="ordered locus">VF_2170</name>
</gene>
<proteinExistence type="inferred from homology"/>
<organism>
    <name type="scientific">Aliivibrio fischeri (strain ATCC 700601 / ES114)</name>
    <name type="common">Vibrio fischeri</name>
    <dbReference type="NCBI Taxonomy" id="312309"/>
    <lineage>
        <taxon>Bacteria</taxon>
        <taxon>Pseudomonadati</taxon>
        <taxon>Pseudomonadota</taxon>
        <taxon>Gammaproteobacteria</taxon>
        <taxon>Vibrionales</taxon>
        <taxon>Vibrionaceae</taxon>
        <taxon>Aliivibrio</taxon>
    </lineage>
</organism>
<accession>Q5E2T1</accession>
<reference key="1">
    <citation type="journal article" date="2005" name="Proc. Natl. Acad. Sci. U.S.A.">
        <title>Complete genome sequence of Vibrio fischeri: a symbiotic bacterium with pathogenic congeners.</title>
        <authorList>
            <person name="Ruby E.G."/>
            <person name="Urbanowski M."/>
            <person name="Campbell J."/>
            <person name="Dunn A."/>
            <person name="Faini M."/>
            <person name="Gunsalus R."/>
            <person name="Lostroh P."/>
            <person name="Lupp C."/>
            <person name="McCann J."/>
            <person name="Millikan D."/>
            <person name="Schaefer A."/>
            <person name="Stabb E."/>
            <person name="Stevens A."/>
            <person name="Visick K."/>
            <person name="Whistler C."/>
            <person name="Greenberg E.P."/>
        </authorList>
    </citation>
    <scope>NUCLEOTIDE SEQUENCE [LARGE SCALE GENOMIC DNA]</scope>
    <source>
        <strain>ATCC 700601 / ES114</strain>
    </source>
</reference>